<accession>Q2W6W7</accession>
<proteinExistence type="inferred from homology"/>
<sequence length="236" mass="25999">MRFAAPLVRATLIKRYKRFMADVRFDDGTEVTAHVANSGAMLGTAEPGMEVWLSPASNPERKLKWNWELVTVDGHLVGVNTAHPNGIVAEAVAAGQVAELAGYDSIRREVKYGVNSRIDLLLEAEGRPKCWVEVKNVHLKRGDWAEFPDAVTVRGTKHLAELTDRVRAGERAVMVYLVQREDCAGFRPAADIDPVYARTLAQATRDGVEAICYTCRLAPDGIDLGAPLTMDLTERI</sequence>
<dbReference type="EMBL" id="AP007255">
    <property type="protein sequence ID" value="BAE50408.1"/>
    <property type="molecule type" value="Genomic_DNA"/>
</dbReference>
<dbReference type="RefSeq" id="WP_011384013.1">
    <property type="nucleotide sequence ID" value="NC_007626.1"/>
</dbReference>
<dbReference type="SMR" id="Q2W6W7"/>
<dbReference type="STRING" id="342108.amb1604"/>
<dbReference type="KEGG" id="mag:amb1604"/>
<dbReference type="HOGENOM" id="CLU_052299_2_0_5"/>
<dbReference type="OrthoDB" id="9802365at2"/>
<dbReference type="Proteomes" id="UP000007058">
    <property type="component" value="Chromosome"/>
</dbReference>
<dbReference type="GO" id="GO:0003677">
    <property type="term" value="F:DNA binding"/>
    <property type="evidence" value="ECO:0007669"/>
    <property type="project" value="InterPro"/>
</dbReference>
<dbReference type="CDD" id="cd22359">
    <property type="entry name" value="SfsA-like_bacterial"/>
    <property type="match status" value="1"/>
</dbReference>
<dbReference type="Gene3D" id="2.40.50.580">
    <property type="match status" value="1"/>
</dbReference>
<dbReference type="Gene3D" id="3.40.1350.60">
    <property type="match status" value="1"/>
</dbReference>
<dbReference type="HAMAP" id="MF_00095">
    <property type="entry name" value="SfsA"/>
    <property type="match status" value="1"/>
</dbReference>
<dbReference type="InterPro" id="IPR005224">
    <property type="entry name" value="SfsA"/>
</dbReference>
<dbReference type="InterPro" id="IPR040452">
    <property type="entry name" value="SfsA_C"/>
</dbReference>
<dbReference type="InterPro" id="IPR041465">
    <property type="entry name" value="SfsA_N"/>
</dbReference>
<dbReference type="NCBIfam" id="TIGR00230">
    <property type="entry name" value="sfsA"/>
    <property type="match status" value="1"/>
</dbReference>
<dbReference type="PANTHER" id="PTHR30545">
    <property type="entry name" value="SUGAR FERMENTATION STIMULATION PROTEIN A"/>
    <property type="match status" value="1"/>
</dbReference>
<dbReference type="PANTHER" id="PTHR30545:SF2">
    <property type="entry name" value="SUGAR FERMENTATION STIMULATION PROTEIN A"/>
    <property type="match status" value="1"/>
</dbReference>
<dbReference type="Pfam" id="PF03749">
    <property type="entry name" value="SfsA"/>
    <property type="match status" value="1"/>
</dbReference>
<dbReference type="Pfam" id="PF17746">
    <property type="entry name" value="SfsA_N"/>
    <property type="match status" value="1"/>
</dbReference>
<reference key="1">
    <citation type="journal article" date="2005" name="DNA Res.">
        <title>Complete genome sequence of the facultative anaerobic magnetotactic bacterium Magnetospirillum sp. strain AMB-1.</title>
        <authorList>
            <person name="Matsunaga T."/>
            <person name="Okamura Y."/>
            <person name="Fukuda Y."/>
            <person name="Wahyudi A.T."/>
            <person name="Murase Y."/>
            <person name="Takeyama H."/>
        </authorList>
    </citation>
    <scope>NUCLEOTIDE SEQUENCE [LARGE SCALE GENOMIC DNA]</scope>
    <source>
        <strain>ATCC 700264 / AMB-1</strain>
    </source>
</reference>
<feature type="chain" id="PRO_1000007993" description="Sugar fermentation stimulation protein homolog">
    <location>
        <begin position="1"/>
        <end position="236"/>
    </location>
</feature>
<protein>
    <recommendedName>
        <fullName evidence="1">Sugar fermentation stimulation protein homolog</fullName>
    </recommendedName>
</protein>
<gene>
    <name evidence="1" type="primary">sfsA</name>
    <name type="ordered locus">amb1604</name>
</gene>
<comment type="similarity">
    <text evidence="1">Belongs to the SfsA family.</text>
</comment>
<organism>
    <name type="scientific">Paramagnetospirillum magneticum (strain ATCC 700264 / AMB-1)</name>
    <name type="common">Magnetospirillum magneticum</name>
    <dbReference type="NCBI Taxonomy" id="342108"/>
    <lineage>
        <taxon>Bacteria</taxon>
        <taxon>Pseudomonadati</taxon>
        <taxon>Pseudomonadota</taxon>
        <taxon>Alphaproteobacteria</taxon>
        <taxon>Rhodospirillales</taxon>
        <taxon>Magnetospirillaceae</taxon>
        <taxon>Paramagnetospirillum</taxon>
    </lineage>
</organism>
<evidence type="ECO:0000255" key="1">
    <source>
        <dbReference type="HAMAP-Rule" id="MF_00095"/>
    </source>
</evidence>
<name>SFSA_PARM1</name>